<sequence length="296" mass="34461">MRWPPWASDTQAQQQSRKSSSEDDERQAAASSTTTSKKKDWESSVTAIDWAAFTEARTIIPTLILTSGFLGAFYIHRRYLRRFPDAVSITPSYFRRRSLLGQVTSVGDGDNFRIYHTPGGRLAGWGWLPWKKIPTSKKELRDKTVHIRLAGIDAPELAHFGRPEQPFAREAHQWLTSYLFGRRVRAYIHRPDQYQRAVASVYVRRLLDFPPFRRRDVSYEMLKRGLATVYEAKIGAEFGGEAMERKYKKAEWWAKLRGVGLWKDYRRNKTKWESPREYKTRMGLEEAAQPGVEIKK</sequence>
<accession>B0XMZ5</accession>
<proteinExistence type="inferred from homology"/>
<reference key="1">
    <citation type="journal article" date="2008" name="PLoS Genet.">
        <title>Genomic islands in the pathogenic filamentous fungus Aspergillus fumigatus.</title>
        <authorList>
            <person name="Fedorova N.D."/>
            <person name="Khaldi N."/>
            <person name="Joardar V.S."/>
            <person name="Maiti R."/>
            <person name="Amedeo P."/>
            <person name="Anderson M.J."/>
            <person name="Crabtree J."/>
            <person name="Silva J.C."/>
            <person name="Badger J.H."/>
            <person name="Albarraq A."/>
            <person name="Angiuoli S."/>
            <person name="Bussey H."/>
            <person name="Bowyer P."/>
            <person name="Cotty P.J."/>
            <person name="Dyer P.S."/>
            <person name="Egan A."/>
            <person name="Galens K."/>
            <person name="Fraser-Liggett C.M."/>
            <person name="Haas B.J."/>
            <person name="Inman J.M."/>
            <person name="Kent R."/>
            <person name="Lemieux S."/>
            <person name="Malavazi I."/>
            <person name="Orvis J."/>
            <person name="Roemer T."/>
            <person name="Ronning C.M."/>
            <person name="Sundaram J.P."/>
            <person name="Sutton G."/>
            <person name="Turner G."/>
            <person name="Venter J.C."/>
            <person name="White O.R."/>
            <person name="Whitty B.R."/>
            <person name="Youngman P."/>
            <person name="Wolfe K.H."/>
            <person name="Goldman G.H."/>
            <person name="Wortman J.R."/>
            <person name="Jiang B."/>
            <person name="Denning D.W."/>
            <person name="Nierman W.C."/>
        </authorList>
    </citation>
    <scope>NUCLEOTIDE SEQUENCE [LARGE SCALE GENOMIC DNA]</scope>
    <source>
        <strain>CBS 144.89 / FGSC A1163 / CEA10</strain>
    </source>
</reference>
<organism>
    <name type="scientific">Aspergillus fumigatus (strain CBS 144.89 / FGSC A1163 / CEA10)</name>
    <name type="common">Neosartorya fumigata</name>
    <dbReference type="NCBI Taxonomy" id="451804"/>
    <lineage>
        <taxon>Eukaryota</taxon>
        <taxon>Fungi</taxon>
        <taxon>Dikarya</taxon>
        <taxon>Ascomycota</taxon>
        <taxon>Pezizomycotina</taxon>
        <taxon>Eurotiomycetes</taxon>
        <taxon>Eurotiomycetidae</taxon>
        <taxon>Eurotiales</taxon>
        <taxon>Aspergillaceae</taxon>
        <taxon>Aspergillus</taxon>
        <taxon>Aspergillus subgen. Fumigati</taxon>
    </lineage>
</organism>
<feature type="chain" id="PRO_0000408643" description="Probable endonuclease lcl3">
    <location>
        <begin position="1"/>
        <end position="296"/>
    </location>
</feature>
<feature type="transmembrane region" description="Helical" evidence="2">
    <location>
        <begin position="59"/>
        <end position="75"/>
    </location>
</feature>
<feature type="domain" description="TNase-like" evidence="3">
    <location>
        <begin position="97"/>
        <end position="264"/>
    </location>
</feature>
<feature type="region of interest" description="Disordered" evidence="4">
    <location>
        <begin position="1"/>
        <end position="36"/>
    </location>
</feature>
<feature type="compositionally biased region" description="Polar residues" evidence="4">
    <location>
        <begin position="8"/>
        <end position="18"/>
    </location>
</feature>
<feature type="active site" evidence="3">
    <location>
        <position position="148"/>
    </location>
</feature>
<feature type="active site" evidence="3">
    <location>
        <position position="156"/>
    </location>
</feature>
<feature type="active site" evidence="3">
    <location>
        <position position="196"/>
    </location>
</feature>
<feature type="binding site" evidence="3">
    <location>
        <position position="153"/>
    </location>
    <ligand>
        <name>Ca(2+)</name>
        <dbReference type="ChEBI" id="CHEBI:29108"/>
    </ligand>
</feature>
<name>LCL3_ASPFC</name>
<dbReference type="EC" id="3.1.-.-"/>
<dbReference type="EMBL" id="DS499594">
    <property type="protein sequence ID" value="EDP55687.1"/>
    <property type="molecule type" value="Genomic_DNA"/>
</dbReference>
<dbReference type="SMR" id="B0XMZ5"/>
<dbReference type="EnsemblFungi" id="EDP55687">
    <property type="protein sequence ID" value="EDP55687"/>
    <property type="gene ID" value="AFUB_003840"/>
</dbReference>
<dbReference type="VEuPathDB" id="FungiDB:AFUB_003840"/>
<dbReference type="HOGENOM" id="CLU_046484_0_1_1"/>
<dbReference type="OrthoDB" id="64827at5052"/>
<dbReference type="PhylomeDB" id="B0XMZ5"/>
<dbReference type="Proteomes" id="UP000001699">
    <property type="component" value="Unassembled WGS sequence"/>
</dbReference>
<dbReference type="GO" id="GO:0016020">
    <property type="term" value="C:membrane"/>
    <property type="evidence" value="ECO:0007669"/>
    <property type="project" value="UniProtKB-SubCell"/>
</dbReference>
<dbReference type="GO" id="GO:0005739">
    <property type="term" value="C:mitochondrion"/>
    <property type="evidence" value="ECO:0007669"/>
    <property type="project" value="UniProtKB-SubCell"/>
</dbReference>
<dbReference type="GO" id="GO:0004519">
    <property type="term" value="F:endonuclease activity"/>
    <property type="evidence" value="ECO:0007669"/>
    <property type="project" value="UniProtKB-KW"/>
</dbReference>
<dbReference type="GO" id="GO:0046872">
    <property type="term" value="F:metal ion binding"/>
    <property type="evidence" value="ECO:0007669"/>
    <property type="project" value="UniProtKB-KW"/>
</dbReference>
<dbReference type="FunFam" id="2.40.50.90:FF:000029">
    <property type="entry name" value="Probable endonuclease lcl3"/>
    <property type="match status" value="1"/>
</dbReference>
<dbReference type="Gene3D" id="2.40.50.90">
    <property type="match status" value="1"/>
</dbReference>
<dbReference type="InterPro" id="IPR035437">
    <property type="entry name" value="SNase_OB-fold_sf"/>
</dbReference>
<dbReference type="InterPro" id="IPR016071">
    <property type="entry name" value="Staphylococal_nuclease_OB-fold"/>
</dbReference>
<dbReference type="PANTHER" id="PTHR12302">
    <property type="entry name" value="EBNA2 BINDING PROTEIN P100"/>
    <property type="match status" value="1"/>
</dbReference>
<dbReference type="PANTHER" id="PTHR12302:SF3">
    <property type="entry name" value="SERINE_THREONINE-PROTEIN KINASE 31"/>
    <property type="match status" value="1"/>
</dbReference>
<dbReference type="Pfam" id="PF00565">
    <property type="entry name" value="SNase"/>
    <property type="match status" value="1"/>
</dbReference>
<dbReference type="SMART" id="SM00318">
    <property type="entry name" value="SNc"/>
    <property type="match status" value="1"/>
</dbReference>
<dbReference type="SUPFAM" id="SSF50199">
    <property type="entry name" value="Staphylococcal nuclease"/>
    <property type="match status" value="1"/>
</dbReference>
<dbReference type="PROSITE" id="PS50830">
    <property type="entry name" value="TNASE_3"/>
    <property type="match status" value="1"/>
</dbReference>
<comment type="subcellular location">
    <subcellularLocation>
        <location>Mitochondrion</location>
    </subcellularLocation>
    <subcellularLocation>
        <location evidence="1">Membrane</location>
        <topology evidence="1">Single-pass membrane protein</topology>
    </subcellularLocation>
</comment>
<comment type="similarity">
    <text evidence="5">Belongs to the LCL3 family.</text>
</comment>
<evidence type="ECO:0000250" key="1"/>
<evidence type="ECO:0000255" key="2"/>
<evidence type="ECO:0000255" key="3">
    <source>
        <dbReference type="PROSITE-ProRule" id="PRU00272"/>
    </source>
</evidence>
<evidence type="ECO:0000256" key="4">
    <source>
        <dbReference type="SAM" id="MobiDB-lite"/>
    </source>
</evidence>
<evidence type="ECO:0000305" key="5"/>
<gene>
    <name type="primary">lcl3</name>
    <name type="ORF">AFUB_003840</name>
</gene>
<protein>
    <recommendedName>
        <fullName>Probable endonuclease lcl3</fullName>
        <ecNumber>3.1.-.-</ecNumber>
    </recommendedName>
</protein>
<keyword id="KW-0106">Calcium</keyword>
<keyword id="KW-0255">Endonuclease</keyword>
<keyword id="KW-0378">Hydrolase</keyword>
<keyword id="KW-0472">Membrane</keyword>
<keyword id="KW-0479">Metal-binding</keyword>
<keyword id="KW-0496">Mitochondrion</keyword>
<keyword id="KW-0540">Nuclease</keyword>
<keyword id="KW-0812">Transmembrane</keyword>
<keyword id="KW-1133">Transmembrane helix</keyword>